<accession>B5R9L5</accession>
<comment type="function">
    <text evidence="1">Presumably involved in the processing and regular turnover of intracellular proteins. Catalyzes the removal of unsubstituted N-terminal amino acids from various peptides.</text>
</comment>
<comment type="catalytic activity">
    <reaction evidence="1">
        <text>Release of an N-terminal amino acid, Xaa-|-Yaa-, in which Xaa is preferably Leu, but may be other amino acids including Pro although not Arg or Lys, and Yaa may be Pro. Amino acid amides and methyl esters are also readily hydrolyzed, but rates on arylamides are exceedingly low.</text>
        <dbReference type="EC" id="3.4.11.1"/>
    </reaction>
</comment>
<comment type="catalytic activity">
    <reaction evidence="1">
        <text>Release of an N-terminal amino acid, preferentially leucine, but not glutamic or aspartic acids.</text>
        <dbReference type="EC" id="3.4.11.10"/>
    </reaction>
</comment>
<comment type="cofactor">
    <cofactor evidence="1">
        <name>Mn(2+)</name>
        <dbReference type="ChEBI" id="CHEBI:29035"/>
    </cofactor>
    <text evidence="1">Binds 2 manganese ions per subunit.</text>
</comment>
<comment type="subcellular location">
    <subcellularLocation>
        <location evidence="1">Cytoplasm</location>
    </subcellularLocation>
</comment>
<comment type="similarity">
    <text evidence="1">Belongs to the peptidase M17 family.</text>
</comment>
<organism>
    <name type="scientific">Salmonella gallinarum (strain 287/91 / NCTC 13346)</name>
    <dbReference type="NCBI Taxonomy" id="550538"/>
    <lineage>
        <taxon>Bacteria</taxon>
        <taxon>Pseudomonadati</taxon>
        <taxon>Pseudomonadota</taxon>
        <taxon>Gammaproteobacteria</taxon>
        <taxon>Enterobacterales</taxon>
        <taxon>Enterobacteriaceae</taxon>
        <taxon>Salmonella</taxon>
    </lineage>
</organism>
<reference key="1">
    <citation type="journal article" date="2008" name="Genome Res.">
        <title>Comparative genome analysis of Salmonella enteritidis PT4 and Salmonella gallinarum 287/91 provides insights into evolutionary and host adaptation pathways.</title>
        <authorList>
            <person name="Thomson N.R."/>
            <person name="Clayton D.J."/>
            <person name="Windhorst D."/>
            <person name="Vernikos G."/>
            <person name="Davidson S."/>
            <person name="Churcher C."/>
            <person name="Quail M.A."/>
            <person name="Stevens M."/>
            <person name="Jones M.A."/>
            <person name="Watson M."/>
            <person name="Barron A."/>
            <person name="Layton A."/>
            <person name="Pickard D."/>
            <person name="Kingsley R.A."/>
            <person name="Bignell A."/>
            <person name="Clark L."/>
            <person name="Harris B."/>
            <person name="Ormond D."/>
            <person name="Abdellah Z."/>
            <person name="Brooks K."/>
            <person name="Cherevach I."/>
            <person name="Chillingworth T."/>
            <person name="Woodward J."/>
            <person name="Norberczak H."/>
            <person name="Lord A."/>
            <person name="Arrowsmith C."/>
            <person name="Jagels K."/>
            <person name="Moule S."/>
            <person name="Mungall K."/>
            <person name="Saunders M."/>
            <person name="Whitehead S."/>
            <person name="Chabalgoity J.A."/>
            <person name="Maskell D."/>
            <person name="Humphreys T."/>
            <person name="Roberts M."/>
            <person name="Barrow P.A."/>
            <person name="Dougan G."/>
            <person name="Parkhill J."/>
        </authorList>
    </citation>
    <scope>NUCLEOTIDE SEQUENCE [LARGE SCALE GENOMIC DNA]</scope>
    <source>
        <strain>287/91 / NCTC 13346</strain>
    </source>
</reference>
<evidence type="ECO:0000255" key="1">
    <source>
        <dbReference type="HAMAP-Rule" id="MF_00181"/>
    </source>
</evidence>
<name>AMPA_SALG2</name>
<feature type="chain" id="PRO_1000098346" description="Probable cytosol aminopeptidase">
    <location>
        <begin position="1"/>
        <end position="503"/>
    </location>
</feature>
<feature type="active site" evidence="1">
    <location>
        <position position="282"/>
    </location>
</feature>
<feature type="active site" evidence="1">
    <location>
        <position position="356"/>
    </location>
</feature>
<feature type="binding site" evidence="1">
    <location>
        <position position="270"/>
    </location>
    <ligand>
        <name>Mn(2+)</name>
        <dbReference type="ChEBI" id="CHEBI:29035"/>
        <label>2</label>
    </ligand>
</feature>
<feature type="binding site" evidence="1">
    <location>
        <position position="275"/>
    </location>
    <ligand>
        <name>Mn(2+)</name>
        <dbReference type="ChEBI" id="CHEBI:29035"/>
        <label>1</label>
    </ligand>
</feature>
<feature type="binding site" evidence="1">
    <location>
        <position position="275"/>
    </location>
    <ligand>
        <name>Mn(2+)</name>
        <dbReference type="ChEBI" id="CHEBI:29035"/>
        <label>2</label>
    </ligand>
</feature>
<feature type="binding site" evidence="1">
    <location>
        <position position="293"/>
    </location>
    <ligand>
        <name>Mn(2+)</name>
        <dbReference type="ChEBI" id="CHEBI:29035"/>
        <label>2</label>
    </ligand>
</feature>
<feature type="binding site" evidence="1">
    <location>
        <position position="352"/>
    </location>
    <ligand>
        <name>Mn(2+)</name>
        <dbReference type="ChEBI" id="CHEBI:29035"/>
        <label>1</label>
    </ligand>
</feature>
<feature type="binding site" evidence="1">
    <location>
        <position position="354"/>
    </location>
    <ligand>
        <name>Mn(2+)</name>
        <dbReference type="ChEBI" id="CHEBI:29035"/>
        <label>1</label>
    </ligand>
</feature>
<feature type="binding site" evidence="1">
    <location>
        <position position="354"/>
    </location>
    <ligand>
        <name>Mn(2+)</name>
        <dbReference type="ChEBI" id="CHEBI:29035"/>
        <label>2</label>
    </ligand>
</feature>
<keyword id="KW-0031">Aminopeptidase</keyword>
<keyword id="KW-0963">Cytoplasm</keyword>
<keyword id="KW-0378">Hydrolase</keyword>
<keyword id="KW-0464">Manganese</keyword>
<keyword id="KW-0479">Metal-binding</keyword>
<keyword id="KW-0645">Protease</keyword>
<protein>
    <recommendedName>
        <fullName evidence="1">Probable cytosol aminopeptidase</fullName>
        <ecNumber evidence="1">3.4.11.1</ecNumber>
    </recommendedName>
    <alternativeName>
        <fullName evidence="1">Leucine aminopeptidase</fullName>
        <shortName evidence="1">LAP</shortName>
        <ecNumber evidence="1">3.4.11.10</ecNumber>
    </alternativeName>
    <alternativeName>
        <fullName evidence="1">Leucyl aminopeptidase</fullName>
    </alternativeName>
</protein>
<sequence>MEFSVKSGSPEKQRSACIVVGVFEPRRLSPIAEQLDKISDGYISALLRRGELEGKPGQTLLLHHVPNVLSERILLIGCGKERELDERQYKQVIQKTINTLNDTGSMEAVCFLTELHVKGRNNYWKVRQAVETAKETLYSFDQLKTNKSEPRRPLRKMVFNVPTRRELTSGERAIQHGLAIAAGIKAAKDLGNMPPNICNAAYLASQARQLADSYSKNVITRVIGEQQMRELGMNAYLAVGHGSQNESLMSVIEYKGNPSEDARPIVLVGKGLTFDSGGISIKPSEGMDEMKYDMCGAAAVYGVMRMVAELQLPINVIGVLAGCENMPGGRAYRPGDVLTTMSGQTVEVLNTDAEGRLVLCDVLTYVERFEPEAVIDVATLTGACVIALGHHITGLMSNHNPLAHELIGASEQAGDRAWRLPLGDEFQEQLESNFADMANIGGRPGGAITAGCFLSRFTRKYNWAHLDIAGTAWRSGKAKGATGRPVALLSQFLLNRAGFNGEE</sequence>
<gene>
    <name evidence="1" type="primary">pepA</name>
    <name type="ordered locus">SG4302</name>
</gene>
<dbReference type="EC" id="3.4.11.1" evidence="1"/>
<dbReference type="EC" id="3.4.11.10" evidence="1"/>
<dbReference type="EMBL" id="AM933173">
    <property type="protein sequence ID" value="CAR40064.1"/>
    <property type="molecule type" value="Genomic_DNA"/>
</dbReference>
<dbReference type="RefSeq" id="WP_000397158.1">
    <property type="nucleotide sequence ID" value="NC_011274.1"/>
</dbReference>
<dbReference type="SMR" id="B5R9L5"/>
<dbReference type="MEROPS" id="M17.003"/>
<dbReference type="KEGG" id="seg:SG4302"/>
<dbReference type="HOGENOM" id="CLU_013734_2_2_6"/>
<dbReference type="Proteomes" id="UP000008321">
    <property type="component" value="Chromosome"/>
</dbReference>
<dbReference type="GO" id="GO:0005737">
    <property type="term" value="C:cytoplasm"/>
    <property type="evidence" value="ECO:0007669"/>
    <property type="project" value="UniProtKB-SubCell"/>
</dbReference>
<dbReference type="GO" id="GO:0030145">
    <property type="term" value="F:manganese ion binding"/>
    <property type="evidence" value="ECO:0007669"/>
    <property type="project" value="UniProtKB-UniRule"/>
</dbReference>
<dbReference type="GO" id="GO:0070006">
    <property type="term" value="F:metalloaminopeptidase activity"/>
    <property type="evidence" value="ECO:0007669"/>
    <property type="project" value="InterPro"/>
</dbReference>
<dbReference type="GO" id="GO:0006508">
    <property type="term" value="P:proteolysis"/>
    <property type="evidence" value="ECO:0007669"/>
    <property type="project" value="UniProtKB-KW"/>
</dbReference>
<dbReference type="CDD" id="cd00433">
    <property type="entry name" value="Peptidase_M17"/>
    <property type="match status" value="1"/>
</dbReference>
<dbReference type="FunFam" id="3.40.220.10:FF:000001">
    <property type="entry name" value="Probable cytosol aminopeptidase"/>
    <property type="match status" value="1"/>
</dbReference>
<dbReference type="FunFam" id="3.40.630.10:FF:000004">
    <property type="entry name" value="Probable cytosol aminopeptidase"/>
    <property type="match status" value="1"/>
</dbReference>
<dbReference type="Gene3D" id="3.40.220.10">
    <property type="entry name" value="Leucine Aminopeptidase, subunit E, domain 1"/>
    <property type="match status" value="1"/>
</dbReference>
<dbReference type="Gene3D" id="3.40.630.10">
    <property type="entry name" value="Zn peptidases"/>
    <property type="match status" value="1"/>
</dbReference>
<dbReference type="HAMAP" id="MF_00181">
    <property type="entry name" value="Cytosol_peptidase_M17"/>
    <property type="match status" value="1"/>
</dbReference>
<dbReference type="InterPro" id="IPR011356">
    <property type="entry name" value="Leucine_aapep/pepB"/>
</dbReference>
<dbReference type="InterPro" id="IPR043472">
    <property type="entry name" value="Macro_dom-like"/>
</dbReference>
<dbReference type="InterPro" id="IPR000819">
    <property type="entry name" value="Peptidase_M17_C"/>
</dbReference>
<dbReference type="InterPro" id="IPR023042">
    <property type="entry name" value="Peptidase_M17_leu_NH2_pept"/>
</dbReference>
<dbReference type="InterPro" id="IPR008283">
    <property type="entry name" value="Peptidase_M17_N"/>
</dbReference>
<dbReference type="NCBIfam" id="NF002072">
    <property type="entry name" value="PRK00913.1-1"/>
    <property type="match status" value="1"/>
</dbReference>
<dbReference type="NCBIfam" id="NF002073">
    <property type="entry name" value="PRK00913.1-2"/>
    <property type="match status" value="1"/>
</dbReference>
<dbReference type="NCBIfam" id="NF002074">
    <property type="entry name" value="PRK00913.1-4"/>
    <property type="match status" value="1"/>
</dbReference>
<dbReference type="PANTHER" id="PTHR11963:SF23">
    <property type="entry name" value="CYTOSOL AMINOPEPTIDASE"/>
    <property type="match status" value="1"/>
</dbReference>
<dbReference type="PANTHER" id="PTHR11963">
    <property type="entry name" value="LEUCINE AMINOPEPTIDASE-RELATED"/>
    <property type="match status" value="1"/>
</dbReference>
<dbReference type="Pfam" id="PF00883">
    <property type="entry name" value="Peptidase_M17"/>
    <property type="match status" value="1"/>
</dbReference>
<dbReference type="Pfam" id="PF02789">
    <property type="entry name" value="Peptidase_M17_N"/>
    <property type="match status" value="1"/>
</dbReference>
<dbReference type="PRINTS" id="PR00481">
    <property type="entry name" value="LAMNOPPTDASE"/>
</dbReference>
<dbReference type="SUPFAM" id="SSF52949">
    <property type="entry name" value="Macro domain-like"/>
    <property type="match status" value="1"/>
</dbReference>
<dbReference type="SUPFAM" id="SSF53187">
    <property type="entry name" value="Zn-dependent exopeptidases"/>
    <property type="match status" value="1"/>
</dbReference>
<dbReference type="PROSITE" id="PS00631">
    <property type="entry name" value="CYTOSOL_AP"/>
    <property type="match status" value="1"/>
</dbReference>
<proteinExistence type="inferred from homology"/>